<proteinExistence type="inferred from homology"/>
<accession>B1MT69</accession>
<evidence type="ECO:0000250" key="1"/>
<evidence type="ECO:0000250" key="2">
    <source>
        <dbReference type="UniProtKB" id="P13621"/>
    </source>
</evidence>
<evidence type="ECO:0000250" key="3">
    <source>
        <dbReference type="UniProtKB" id="P19483"/>
    </source>
</evidence>
<evidence type="ECO:0000250" key="4">
    <source>
        <dbReference type="UniProtKB" id="P48047"/>
    </source>
</evidence>
<evidence type="ECO:0000250" key="5">
    <source>
        <dbReference type="UniProtKB" id="Q9DB20"/>
    </source>
</evidence>
<evidence type="ECO:0000305" key="6"/>
<feature type="transit peptide" description="Mitochondrion" evidence="1">
    <location>
        <begin position="1"/>
        <end position="23"/>
    </location>
</feature>
<feature type="chain" id="PRO_0000350575" description="ATP synthase peripheral stalk subunit OSCP, mitochondrial">
    <location>
        <begin position="24"/>
        <end position="213"/>
    </location>
</feature>
<feature type="short sequence motif" description="SIFI-degron" evidence="4">
    <location>
        <begin position="5"/>
        <end position="23"/>
    </location>
</feature>
<feature type="modified residue" description="N6-acetyllysine" evidence="5">
    <location>
        <position position="54"/>
    </location>
</feature>
<feature type="modified residue" description="N6-acetyllysine" evidence="5">
    <location>
        <position position="60"/>
    </location>
</feature>
<feature type="modified residue" description="N6-acetyllysine" evidence="5">
    <location>
        <position position="70"/>
    </location>
</feature>
<feature type="modified residue" description="N6-acetyllysine" evidence="5">
    <location>
        <position position="73"/>
    </location>
</feature>
<feature type="modified residue" description="N6-succinyllysine" evidence="5">
    <location>
        <position position="90"/>
    </location>
</feature>
<feature type="modified residue" description="N6-acetyllysine; alternate" evidence="5">
    <location>
        <position position="158"/>
    </location>
</feature>
<feature type="modified residue" description="N6-succinyllysine; alternate" evidence="5">
    <location>
        <position position="158"/>
    </location>
</feature>
<feature type="modified residue" description="N6-acetyllysine; alternate" evidence="4">
    <location>
        <position position="162"/>
    </location>
</feature>
<feature type="modified residue" description="N6-succinyllysine; alternate" evidence="5">
    <location>
        <position position="162"/>
    </location>
</feature>
<feature type="modified residue" description="N6-acetyllysine" evidence="4">
    <location>
        <position position="172"/>
    </location>
</feature>
<feature type="modified residue" description="N6-acetyllysine" evidence="5">
    <location>
        <position position="176"/>
    </location>
</feature>
<feature type="modified residue" description="N6-acetyllysine" evidence="4">
    <location>
        <position position="192"/>
    </location>
</feature>
<feature type="modified residue" description="N6-succinyllysine" evidence="5">
    <location>
        <position position="199"/>
    </location>
</feature>
<keyword id="KW-0007">Acetylation</keyword>
<keyword id="KW-0066">ATP synthesis</keyword>
<keyword id="KW-0375">Hydrogen ion transport</keyword>
<keyword id="KW-0406">Ion transport</keyword>
<keyword id="KW-0472">Membrane</keyword>
<keyword id="KW-0496">Mitochondrion</keyword>
<keyword id="KW-0999">Mitochondrion inner membrane</keyword>
<keyword id="KW-0809">Transit peptide</keyword>
<keyword id="KW-0813">Transport</keyword>
<keyword id="KW-0832">Ubl conjugation</keyword>
<reference key="1">
    <citation type="submission" date="2008-03" db="EMBL/GenBank/DDBJ databases">
        <title>NISC comparative sequencing initiative.</title>
        <authorList>
            <person name="Antonellis A."/>
            <person name="Benjamin B."/>
            <person name="Blakesley R.W."/>
            <person name="Bouffard G.G."/>
            <person name="Brinkley C."/>
            <person name="Brooks S."/>
            <person name="Chu G."/>
            <person name="Chub I."/>
            <person name="Coleman H."/>
            <person name="Fuksenko T."/>
            <person name="Gestole M."/>
            <person name="Gregory M."/>
            <person name="Guan X."/>
            <person name="Gupta J."/>
            <person name="Gurson N."/>
            <person name="Han E."/>
            <person name="Han J."/>
            <person name="Hansen N."/>
            <person name="Hargrove A."/>
            <person name="Hines-Harris K."/>
            <person name="Ho S.-L."/>
            <person name="Hu P."/>
            <person name="Hunter G."/>
            <person name="Hurle B."/>
            <person name="Idol J.R."/>
            <person name="Johnson T."/>
            <person name="Knight E."/>
            <person name="Kwong P."/>
            <person name="Lee-Lin S.-Q."/>
            <person name="Legaspi R."/>
            <person name="Madden M."/>
            <person name="Maduro Q.L."/>
            <person name="Maduro V.B."/>
            <person name="Margulies E.H."/>
            <person name="Masiello C."/>
            <person name="Maskeri B."/>
            <person name="McDowell J."/>
            <person name="Merkulov G."/>
            <person name="Montemayor C."/>
            <person name="Mullikin J.C."/>
            <person name="Park M."/>
            <person name="Prasad A."/>
            <person name="Ramsahoye C."/>
            <person name="Reddix-Dugue N."/>
            <person name="Riebow N."/>
            <person name="Schandler K."/>
            <person name="Schueler M.G."/>
            <person name="Sison C."/>
            <person name="Smith L."/>
            <person name="Stantripop S."/>
            <person name="Thomas J.W."/>
            <person name="Thomas P.J."/>
            <person name="Tsipouri V."/>
            <person name="Young A."/>
            <person name="Green E.D."/>
        </authorList>
    </citation>
    <scope>NUCLEOTIDE SEQUENCE [LARGE SCALE GENOMIC DNA]</scope>
</reference>
<dbReference type="EMBL" id="DP000619">
    <property type="protein sequence ID" value="ACA51064.1"/>
    <property type="molecule type" value="Genomic_DNA"/>
</dbReference>
<dbReference type="SMR" id="B1MT69"/>
<dbReference type="GO" id="GO:0005743">
    <property type="term" value="C:mitochondrial inner membrane"/>
    <property type="evidence" value="ECO:0007669"/>
    <property type="project" value="UniProtKB-SubCell"/>
</dbReference>
<dbReference type="GO" id="GO:0045259">
    <property type="term" value="C:proton-transporting ATP synthase complex"/>
    <property type="evidence" value="ECO:0000250"/>
    <property type="project" value="UniProtKB"/>
</dbReference>
<dbReference type="GO" id="GO:0046933">
    <property type="term" value="F:proton-transporting ATP synthase activity, rotational mechanism"/>
    <property type="evidence" value="ECO:0007669"/>
    <property type="project" value="InterPro"/>
</dbReference>
<dbReference type="FunFam" id="1.10.520.20:FF:000002">
    <property type="entry name" value="ATP synthase subunit O, mitochondrial"/>
    <property type="match status" value="1"/>
</dbReference>
<dbReference type="Gene3D" id="1.10.520.20">
    <property type="entry name" value="N-terminal domain of the delta subunit of the F1F0-ATP synthase"/>
    <property type="match status" value="1"/>
</dbReference>
<dbReference type="HAMAP" id="MF_01416">
    <property type="entry name" value="ATP_synth_delta_bact"/>
    <property type="match status" value="1"/>
</dbReference>
<dbReference type="InterPro" id="IPR026015">
    <property type="entry name" value="ATP_synth_OSCP/delta_N_sf"/>
</dbReference>
<dbReference type="InterPro" id="IPR020781">
    <property type="entry name" value="ATPase_OSCP/d_CS"/>
</dbReference>
<dbReference type="InterPro" id="IPR000711">
    <property type="entry name" value="ATPase_OSCP/dsu"/>
</dbReference>
<dbReference type="NCBIfam" id="TIGR01145">
    <property type="entry name" value="ATP_synt_delta"/>
    <property type="match status" value="1"/>
</dbReference>
<dbReference type="PANTHER" id="PTHR11910">
    <property type="entry name" value="ATP SYNTHASE DELTA CHAIN"/>
    <property type="match status" value="1"/>
</dbReference>
<dbReference type="Pfam" id="PF00213">
    <property type="entry name" value="OSCP"/>
    <property type="match status" value="1"/>
</dbReference>
<dbReference type="PRINTS" id="PR00125">
    <property type="entry name" value="ATPASEDELTA"/>
</dbReference>
<dbReference type="SUPFAM" id="SSF47928">
    <property type="entry name" value="N-terminal domain of the delta subunit of the F1F0-ATP synthase"/>
    <property type="match status" value="1"/>
</dbReference>
<dbReference type="PROSITE" id="PS00389">
    <property type="entry name" value="ATPASE_DELTA"/>
    <property type="match status" value="1"/>
</dbReference>
<gene>
    <name evidence="4" type="primary">ATP5PO</name>
    <name type="synonym">ATP5O</name>
</gene>
<protein>
    <recommendedName>
        <fullName evidence="6">ATP synthase peripheral stalk subunit OSCP, mitochondrial</fullName>
    </recommendedName>
    <alternativeName>
        <fullName evidence="6">ATP synthase subunit O</fullName>
    </alternativeName>
    <alternativeName>
        <fullName>Oligomycin sensitivity conferral protein</fullName>
        <shortName>OSCP</shortName>
    </alternativeName>
</protein>
<name>ATPO_PLEMO</name>
<sequence>MAAPAVSGLSRQVRYFSTSVVRPFAKLVRPPVQVYGIEGRYATALYSAASKQKKLEQVEKELLRVAQILKEPKVAASVLNPYVKHSVKVKSLSDIIAKERFSPLTTNLINLLAENGRLSNTQGVVSAFSTMMSVHRGEIPCTVTTASPLEETTLSELKTVLKSFLSQGQILKLEVKTDPSIMGGMIVRIGEKYVDMSAKTKIQKLSKAMREVI</sequence>
<comment type="function">
    <text evidence="2 3 4">Subunit OSCP, of the mitochondrial membrane ATP synthase complex (F(1)F(0) ATP synthase or Complex V) that produces ATP from ADP in the presence of a proton gradient across the membrane which is generated by electron transport complexes of the respiratory chain. ATP synthase complex consist of a soluble F(1) head domain - the catalytic core - and a membrane F(1) domain - the membrane proton channel. These two domains are linked by a central stalk rotating inside the F(1) region and a stationary peripheral stalk. During catalysis, ATP synthesis in the catalytic domain of F(1) is coupled via a rotary mechanism of the central stalk subunits to proton translocation (By similarity). In vivo, can only synthesize ATP although its ATP hydrolase activity can be activated artificially in vitro (By similarity). Part of the complex F(0) domain (By similarity). Part of the complex F(0) domain and the peripheric stalk, which acts as a stator to hold the catalytic alpha(3)beta(3) subcomplex and subunit a/ATP6 static relative to the rotary elements (By similarity).</text>
</comment>
<comment type="subunit">
    <text evidence="4">Component of the ATP synthase complex composed at least of ATP5F1A/subunit alpha, ATP5F1B/subunit beta, ATP5MC1/subunit c (homooctomer), MT-ATP6/subunit a, MT-ATP8/subunit 8, ATP5ME/subunit e, ATP5MF/subunit f, ATP5MG/subunit g, ATP5MK/subunit k, ATP5MJ/subunit j, ATP5F1C/subunit gamma, ATP5F1D/subunit delta, ATP5F1E/subunit epsilon, ATP5PF/subunit F6, ATP5PB/subunit b, ATP5PD/subunit d, ATP5PO/subunit OSCP. ATP synthase complex consists of a soluble F(1) head domain (subunits alpha(3) and beta(3)) - the catalytic core - and a membrane F(0) domain - the membrane proton channel (subunits c, a, 8, e, f, g, k and j). These two domains are linked by a central stalk (subunits gamma, delta, and epsilon) rotating inside the F1 region and a stationary peripheral stalk (subunits F6, b, d, and OSCP).</text>
</comment>
<comment type="subcellular location">
    <subcellularLocation>
        <location evidence="1">Mitochondrion</location>
    </subcellularLocation>
    <subcellularLocation>
        <location evidence="1">Mitochondrion inner membrane</location>
    </subcellularLocation>
</comment>
<comment type="PTM">
    <text evidence="4">Acetylation at Lys-162 decreases ATP production. Deacetylated by SIRT3 (By similarity).</text>
</comment>
<comment type="PTM">
    <text evidence="4">In response to mitochondrial stress, the precursor protein is ubiquitinated by the SIFI complex in the cytoplasm before mitochondrial import, leading to its degradation. Within the SIFI complex, UBR4 initiates ubiquitin chain that are further elongated or branched by KCMF1.</text>
</comment>
<comment type="similarity">
    <text evidence="6">Belongs to the ATPase delta chain family.</text>
</comment>
<organism>
    <name type="scientific">Plecturocebus moloch</name>
    <name type="common">Dusky titi monkey</name>
    <name type="synonym">Callicebus moloch</name>
    <dbReference type="NCBI Taxonomy" id="9523"/>
    <lineage>
        <taxon>Eukaryota</taxon>
        <taxon>Metazoa</taxon>
        <taxon>Chordata</taxon>
        <taxon>Craniata</taxon>
        <taxon>Vertebrata</taxon>
        <taxon>Euteleostomi</taxon>
        <taxon>Mammalia</taxon>
        <taxon>Eutheria</taxon>
        <taxon>Euarchontoglires</taxon>
        <taxon>Primates</taxon>
        <taxon>Haplorrhini</taxon>
        <taxon>Platyrrhini</taxon>
        <taxon>Pitheciidae</taxon>
        <taxon>Callicebinae</taxon>
        <taxon>Plecturocebus</taxon>
    </lineage>
</organism>